<organism>
    <name type="scientific">Homo sapiens</name>
    <name type="common">Human</name>
    <dbReference type="NCBI Taxonomy" id="9606"/>
    <lineage>
        <taxon>Eukaryota</taxon>
        <taxon>Metazoa</taxon>
        <taxon>Chordata</taxon>
        <taxon>Craniata</taxon>
        <taxon>Vertebrata</taxon>
        <taxon>Euteleostomi</taxon>
        <taxon>Mammalia</taxon>
        <taxon>Eutheria</taxon>
        <taxon>Euarchontoglires</taxon>
        <taxon>Primates</taxon>
        <taxon>Haplorrhini</taxon>
        <taxon>Catarrhini</taxon>
        <taxon>Hominidae</taxon>
        <taxon>Homo</taxon>
    </lineage>
</organism>
<evidence type="ECO:0000255" key="1">
    <source>
        <dbReference type="PROSITE-ProRule" id="PRU00659"/>
    </source>
</evidence>
<evidence type="ECO:0000269" key="2">
    <source>
    </source>
</evidence>
<evidence type="ECO:0000303" key="3">
    <source>
    </source>
</evidence>
<evidence type="ECO:0000305" key="4"/>
<sequence>MDQSRVLLWVKAEPFIVGALQVPPPSKFSLHYLRKISTYVQIRATEGAYPRLYWSTWRHIACGKLQLAKDLAWLYFEIFDSLSMKTPEERLEWSEVLSNCMSEEEVEKQRNQLSVDTLQFLLFLYIQQLNKVSLRTSLIGEEWPSPRNKSQSPDLTEKSNCHNKNWNDYSHQAFVYDHLSDLLELLLDPKQLTASFHSTHSSLVSREAVVALSFLIEGTISRARKIYPLHELALWQPLHADSGFSKISKTFSFYKLETWLRSCLTGNPFGTSACLKSGKKLAWAHQVEGTTKRAKIACNTHVAPRMHRLVVMSQVYKQTLAKSSDTLAGAHVKIHRCNESFIYLLSPLRSVTIEKCRNSIFVLGPVGTTLHLHSCDNVKVIAVCHRLSISSTTGCIFHVLTPTRPLILSGNQTVTFAPFHTHYPMLEDHMARTGLATVPNYWDNPMVVCRENSDTRVFQLLPPCEFYVFIIPFEMEGDTTEIPGGLPSVYQKALGQREQKIQIWQKTVKEAHLTKDQRKQFQVLVENKFYEWLINTGHRQQLDSLVPPAAGSKQAAG</sequence>
<accession>Q9NVR7</accession>
<accession>B3KW69</accession>
<accession>D3DNU6</accession>
<accession>G5E9J4</accession>
<protein>
    <recommendedName>
        <fullName>TBCC domain-containing protein 1</fullName>
    </recommendedName>
</protein>
<reference key="1">
    <citation type="journal article" date="2004" name="Nat. Genet.">
        <title>Complete sequencing and characterization of 21,243 full-length human cDNAs.</title>
        <authorList>
            <person name="Ota T."/>
            <person name="Suzuki Y."/>
            <person name="Nishikawa T."/>
            <person name="Otsuki T."/>
            <person name="Sugiyama T."/>
            <person name="Irie R."/>
            <person name="Wakamatsu A."/>
            <person name="Hayashi K."/>
            <person name="Sato H."/>
            <person name="Nagai K."/>
            <person name="Kimura K."/>
            <person name="Makita H."/>
            <person name="Sekine M."/>
            <person name="Obayashi M."/>
            <person name="Nishi T."/>
            <person name="Shibahara T."/>
            <person name="Tanaka T."/>
            <person name="Ishii S."/>
            <person name="Yamamoto J."/>
            <person name="Saito K."/>
            <person name="Kawai Y."/>
            <person name="Isono Y."/>
            <person name="Nakamura Y."/>
            <person name="Nagahari K."/>
            <person name="Murakami K."/>
            <person name="Yasuda T."/>
            <person name="Iwayanagi T."/>
            <person name="Wagatsuma M."/>
            <person name="Shiratori A."/>
            <person name="Sudo H."/>
            <person name="Hosoiri T."/>
            <person name="Kaku Y."/>
            <person name="Kodaira H."/>
            <person name="Kondo H."/>
            <person name="Sugawara M."/>
            <person name="Takahashi M."/>
            <person name="Kanda K."/>
            <person name="Yokoi T."/>
            <person name="Furuya T."/>
            <person name="Kikkawa E."/>
            <person name="Omura Y."/>
            <person name="Abe K."/>
            <person name="Kamihara K."/>
            <person name="Katsuta N."/>
            <person name="Sato K."/>
            <person name="Tanikawa M."/>
            <person name="Yamazaki M."/>
            <person name="Ninomiya K."/>
            <person name="Ishibashi T."/>
            <person name="Yamashita H."/>
            <person name="Murakawa K."/>
            <person name="Fujimori K."/>
            <person name="Tanai H."/>
            <person name="Kimata M."/>
            <person name="Watanabe M."/>
            <person name="Hiraoka S."/>
            <person name="Chiba Y."/>
            <person name="Ishida S."/>
            <person name="Ono Y."/>
            <person name="Takiguchi S."/>
            <person name="Watanabe S."/>
            <person name="Yosida M."/>
            <person name="Hotuta T."/>
            <person name="Kusano J."/>
            <person name="Kanehori K."/>
            <person name="Takahashi-Fujii A."/>
            <person name="Hara H."/>
            <person name="Tanase T.-O."/>
            <person name="Nomura Y."/>
            <person name="Togiya S."/>
            <person name="Komai F."/>
            <person name="Hara R."/>
            <person name="Takeuchi K."/>
            <person name="Arita M."/>
            <person name="Imose N."/>
            <person name="Musashino K."/>
            <person name="Yuuki H."/>
            <person name="Oshima A."/>
            <person name="Sasaki N."/>
            <person name="Aotsuka S."/>
            <person name="Yoshikawa Y."/>
            <person name="Matsunawa H."/>
            <person name="Ichihara T."/>
            <person name="Shiohata N."/>
            <person name="Sano S."/>
            <person name="Moriya S."/>
            <person name="Momiyama H."/>
            <person name="Satoh N."/>
            <person name="Takami S."/>
            <person name="Terashima Y."/>
            <person name="Suzuki O."/>
            <person name="Nakagawa S."/>
            <person name="Senoh A."/>
            <person name="Mizoguchi H."/>
            <person name="Goto Y."/>
            <person name="Shimizu F."/>
            <person name="Wakebe H."/>
            <person name="Hishigaki H."/>
            <person name="Watanabe T."/>
            <person name="Sugiyama A."/>
            <person name="Takemoto M."/>
            <person name="Kawakami B."/>
            <person name="Yamazaki M."/>
            <person name="Watanabe K."/>
            <person name="Kumagai A."/>
            <person name="Itakura S."/>
            <person name="Fukuzumi Y."/>
            <person name="Fujimori Y."/>
            <person name="Komiyama M."/>
            <person name="Tashiro H."/>
            <person name="Tanigami A."/>
            <person name="Fujiwara T."/>
            <person name="Ono T."/>
            <person name="Yamada K."/>
            <person name="Fujii Y."/>
            <person name="Ozaki K."/>
            <person name="Hirao M."/>
            <person name="Ohmori Y."/>
            <person name="Kawabata A."/>
            <person name="Hikiji T."/>
            <person name="Kobatake N."/>
            <person name="Inagaki H."/>
            <person name="Ikema Y."/>
            <person name="Okamoto S."/>
            <person name="Okitani R."/>
            <person name="Kawakami T."/>
            <person name="Noguchi S."/>
            <person name="Itoh T."/>
            <person name="Shigeta K."/>
            <person name="Senba T."/>
            <person name="Matsumura K."/>
            <person name="Nakajima Y."/>
            <person name="Mizuno T."/>
            <person name="Morinaga M."/>
            <person name="Sasaki M."/>
            <person name="Togashi T."/>
            <person name="Oyama M."/>
            <person name="Hata H."/>
            <person name="Watanabe M."/>
            <person name="Komatsu T."/>
            <person name="Mizushima-Sugano J."/>
            <person name="Satoh T."/>
            <person name="Shirai Y."/>
            <person name="Takahashi Y."/>
            <person name="Nakagawa K."/>
            <person name="Okumura K."/>
            <person name="Nagase T."/>
            <person name="Nomura N."/>
            <person name="Kikuchi H."/>
            <person name="Masuho Y."/>
            <person name="Yamashita R."/>
            <person name="Nakai K."/>
            <person name="Yada T."/>
            <person name="Nakamura Y."/>
            <person name="Ohara O."/>
            <person name="Isogai T."/>
            <person name="Sugano S."/>
        </authorList>
    </citation>
    <scope>NUCLEOTIDE SEQUENCE [LARGE SCALE MRNA] (ISOFORMS 1 AND 2)</scope>
    <source>
        <tissue>Teratocarcinoma</tissue>
        <tissue>Uterus</tissue>
    </source>
</reference>
<reference key="2">
    <citation type="journal article" date="2006" name="Nature">
        <title>The DNA sequence, annotation and analysis of human chromosome 3.</title>
        <authorList>
            <person name="Muzny D.M."/>
            <person name="Scherer S.E."/>
            <person name="Kaul R."/>
            <person name="Wang J."/>
            <person name="Yu J."/>
            <person name="Sudbrak R."/>
            <person name="Buhay C.J."/>
            <person name="Chen R."/>
            <person name="Cree A."/>
            <person name="Ding Y."/>
            <person name="Dugan-Rocha S."/>
            <person name="Gill R."/>
            <person name="Gunaratne P."/>
            <person name="Harris R.A."/>
            <person name="Hawes A.C."/>
            <person name="Hernandez J."/>
            <person name="Hodgson A.V."/>
            <person name="Hume J."/>
            <person name="Jackson A."/>
            <person name="Khan Z.M."/>
            <person name="Kovar-Smith C."/>
            <person name="Lewis L.R."/>
            <person name="Lozado R.J."/>
            <person name="Metzker M.L."/>
            <person name="Milosavljevic A."/>
            <person name="Miner G.R."/>
            <person name="Morgan M.B."/>
            <person name="Nazareth L.V."/>
            <person name="Scott G."/>
            <person name="Sodergren E."/>
            <person name="Song X.-Z."/>
            <person name="Steffen D."/>
            <person name="Wei S."/>
            <person name="Wheeler D.A."/>
            <person name="Wright M.W."/>
            <person name="Worley K.C."/>
            <person name="Yuan Y."/>
            <person name="Zhang Z."/>
            <person name="Adams C.Q."/>
            <person name="Ansari-Lari M.A."/>
            <person name="Ayele M."/>
            <person name="Brown M.J."/>
            <person name="Chen G."/>
            <person name="Chen Z."/>
            <person name="Clendenning J."/>
            <person name="Clerc-Blankenburg K.P."/>
            <person name="Chen R."/>
            <person name="Chen Z."/>
            <person name="Davis C."/>
            <person name="Delgado O."/>
            <person name="Dinh H.H."/>
            <person name="Dong W."/>
            <person name="Draper H."/>
            <person name="Ernst S."/>
            <person name="Fu G."/>
            <person name="Gonzalez-Garay M.L."/>
            <person name="Garcia D.K."/>
            <person name="Gillett W."/>
            <person name="Gu J."/>
            <person name="Hao B."/>
            <person name="Haugen E."/>
            <person name="Havlak P."/>
            <person name="He X."/>
            <person name="Hennig S."/>
            <person name="Hu S."/>
            <person name="Huang W."/>
            <person name="Jackson L.R."/>
            <person name="Jacob L.S."/>
            <person name="Kelly S.H."/>
            <person name="Kube M."/>
            <person name="Levy R."/>
            <person name="Li Z."/>
            <person name="Liu B."/>
            <person name="Liu J."/>
            <person name="Liu W."/>
            <person name="Lu J."/>
            <person name="Maheshwari M."/>
            <person name="Nguyen B.-V."/>
            <person name="Okwuonu G.O."/>
            <person name="Palmeiri A."/>
            <person name="Pasternak S."/>
            <person name="Perez L.M."/>
            <person name="Phelps K.A."/>
            <person name="Plopper F.J."/>
            <person name="Qiang B."/>
            <person name="Raymond C."/>
            <person name="Rodriguez R."/>
            <person name="Saenphimmachak C."/>
            <person name="Santibanez J."/>
            <person name="Shen H."/>
            <person name="Shen Y."/>
            <person name="Subramanian S."/>
            <person name="Tabor P.E."/>
            <person name="Verduzco D."/>
            <person name="Waldron L."/>
            <person name="Wang J."/>
            <person name="Wang J."/>
            <person name="Wang Q."/>
            <person name="Williams G.A."/>
            <person name="Wong G.K.-S."/>
            <person name="Yao Z."/>
            <person name="Zhang J."/>
            <person name="Zhang X."/>
            <person name="Zhao G."/>
            <person name="Zhou J."/>
            <person name="Zhou Y."/>
            <person name="Nelson D."/>
            <person name="Lehrach H."/>
            <person name="Reinhardt R."/>
            <person name="Naylor S.L."/>
            <person name="Yang H."/>
            <person name="Olson M."/>
            <person name="Weinstock G."/>
            <person name="Gibbs R.A."/>
        </authorList>
    </citation>
    <scope>NUCLEOTIDE SEQUENCE [LARGE SCALE GENOMIC DNA]</scope>
</reference>
<reference key="3">
    <citation type="submission" date="2005-09" db="EMBL/GenBank/DDBJ databases">
        <authorList>
            <person name="Mural R.J."/>
            <person name="Istrail S."/>
            <person name="Sutton G.G."/>
            <person name="Florea L."/>
            <person name="Halpern A.L."/>
            <person name="Mobarry C.M."/>
            <person name="Lippert R."/>
            <person name="Walenz B."/>
            <person name="Shatkay H."/>
            <person name="Dew I."/>
            <person name="Miller J.R."/>
            <person name="Flanigan M.J."/>
            <person name="Edwards N.J."/>
            <person name="Bolanos R."/>
            <person name="Fasulo D."/>
            <person name="Halldorsson B.V."/>
            <person name="Hannenhalli S."/>
            <person name="Turner R."/>
            <person name="Yooseph S."/>
            <person name="Lu F."/>
            <person name="Nusskern D.R."/>
            <person name="Shue B.C."/>
            <person name="Zheng X.H."/>
            <person name="Zhong F."/>
            <person name="Delcher A.L."/>
            <person name="Huson D.H."/>
            <person name="Kravitz S.A."/>
            <person name="Mouchard L."/>
            <person name="Reinert K."/>
            <person name="Remington K.A."/>
            <person name="Clark A.G."/>
            <person name="Waterman M.S."/>
            <person name="Eichler E.E."/>
            <person name="Adams M.D."/>
            <person name="Hunkapiller M.W."/>
            <person name="Myers E.W."/>
            <person name="Venter J.C."/>
        </authorList>
    </citation>
    <scope>NUCLEOTIDE SEQUENCE [LARGE SCALE GENOMIC DNA]</scope>
</reference>
<reference key="4">
    <citation type="journal article" date="2004" name="Genome Res.">
        <title>The status, quality, and expansion of the NIH full-length cDNA project: the Mammalian Gene Collection (MGC).</title>
        <authorList>
            <consortium name="The MGC Project Team"/>
        </authorList>
    </citation>
    <scope>NUCLEOTIDE SEQUENCE [LARGE SCALE MRNA] (ISOFORM 1)</scope>
    <source>
        <tissue>Brain</tissue>
    </source>
</reference>
<reference key="5">
    <citation type="journal article" date="2010" name="EMBO Rep.">
        <title>TBCCD1, a new centrosomal protein, is required for centrosome and Golgi apparatus positioning.</title>
        <authorList>
            <person name="Goncalves J."/>
            <person name="Nolasco S."/>
            <person name="Nascimento R."/>
            <person name="Lopez Fanarraga M."/>
            <person name="Zabala J.C."/>
            <person name="Soares H."/>
        </authorList>
    </citation>
    <scope>FUNCTION</scope>
    <scope>SUBCELLULAR LOCATION</scope>
</reference>
<comment type="function">
    <text evidence="2">Plays a role in the regulation of centrosome and Golgi apparatus positioning, with consequences on cell shape and cell migration.</text>
</comment>
<comment type="interaction">
    <interactant intactId="EBI-7818932">
        <id>Q9NVR7</id>
    </interactant>
    <interactant intactId="EBI-12898559">
        <id>Q8IV03</id>
        <label>LURAP1L</label>
    </interactant>
    <organismsDiffer>false</organismsDiffer>
    <experiments>3</experiments>
</comment>
<comment type="subcellular location">
    <subcellularLocation>
        <location evidence="2">Cytoplasm</location>
        <location evidence="2">Cytoskeleton</location>
        <location evidence="2">Microtubule organizing center</location>
        <location evidence="2">Centrosome</location>
    </subcellularLocation>
    <subcellularLocation>
        <location evidence="2">Cytoplasm</location>
        <location evidence="2">Cytoskeleton</location>
        <location evidence="2">Spindle pole</location>
    </subcellularLocation>
    <text>Localizes at the spindle midzone, midbody and basal bodies of primary and motile cilia.</text>
</comment>
<comment type="alternative products">
    <event type="alternative splicing"/>
    <isoform>
        <id>Q9NVR7-1</id>
        <name>1</name>
        <sequence type="displayed"/>
    </isoform>
    <isoform>
        <id>Q9NVR7-2</id>
        <name>2</name>
        <sequence type="described" ref="VSP_054000 VSP_054001"/>
    </isoform>
</comment>
<comment type="similarity">
    <text evidence="4">Belongs to the TBCC family.</text>
</comment>
<keyword id="KW-0025">Alternative splicing</keyword>
<keyword id="KW-0963">Cytoplasm</keyword>
<keyword id="KW-0206">Cytoskeleton</keyword>
<keyword id="KW-1267">Proteomics identification</keyword>
<keyword id="KW-1185">Reference proteome</keyword>
<dbReference type="EMBL" id="AK001422">
    <property type="protein sequence ID" value="BAA91682.1"/>
    <property type="molecule type" value="mRNA"/>
</dbReference>
<dbReference type="EMBL" id="AK124362">
    <property type="protein sequence ID" value="BAG54031.1"/>
    <property type="molecule type" value="mRNA"/>
</dbReference>
<dbReference type="EMBL" id="AC068631">
    <property type="status" value="NOT_ANNOTATED_CDS"/>
    <property type="molecule type" value="Genomic_DNA"/>
</dbReference>
<dbReference type="EMBL" id="CH471052">
    <property type="protein sequence ID" value="EAW78191.1"/>
    <property type="molecule type" value="Genomic_DNA"/>
</dbReference>
<dbReference type="EMBL" id="CH471052">
    <property type="protein sequence ID" value="EAW78192.1"/>
    <property type="molecule type" value="Genomic_DNA"/>
</dbReference>
<dbReference type="EMBL" id="CH471052">
    <property type="protein sequence ID" value="EAW78193.1"/>
    <property type="molecule type" value="Genomic_DNA"/>
</dbReference>
<dbReference type="EMBL" id="BC025748">
    <property type="protein sequence ID" value="AAH25748.1"/>
    <property type="molecule type" value="mRNA"/>
</dbReference>
<dbReference type="CCDS" id="CCDS3276.1">
    <molecule id="Q9NVR7-1"/>
</dbReference>
<dbReference type="CCDS" id="CCDS75061.1">
    <molecule id="Q9NVR7-2"/>
</dbReference>
<dbReference type="RefSeq" id="NP_001127887.1">
    <molecule id="Q9NVR7-1"/>
    <property type="nucleotide sequence ID" value="NM_001134415.1"/>
</dbReference>
<dbReference type="RefSeq" id="NP_001273678.1">
    <molecule id="Q9NVR7-2"/>
    <property type="nucleotide sequence ID" value="NM_001286749.2"/>
</dbReference>
<dbReference type="RefSeq" id="NP_060608.1">
    <molecule id="Q9NVR7-1"/>
    <property type="nucleotide sequence ID" value="NM_018138.5"/>
</dbReference>
<dbReference type="SMR" id="Q9NVR7"/>
<dbReference type="BioGRID" id="120470">
    <property type="interactions" value="24"/>
</dbReference>
<dbReference type="FunCoup" id="Q9NVR7">
    <property type="interactions" value="583"/>
</dbReference>
<dbReference type="IntAct" id="Q9NVR7">
    <property type="interactions" value="21"/>
</dbReference>
<dbReference type="MINT" id="Q9NVR7"/>
<dbReference type="STRING" id="9606.ENSP00000411253"/>
<dbReference type="GlyGen" id="Q9NVR7">
    <property type="glycosylation" value="1 site, 1 O-linked glycan (1 site)"/>
</dbReference>
<dbReference type="iPTMnet" id="Q9NVR7"/>
<dbReference type="PhosphoSitePlus" id="Q9NVR7"/>
<dbReference type="SwissPalm" id="Q9NVR7"/>
<dbReference type="BioMuta" id="TBCCD1"/>
<dbReference type="DMDM" id="74734544"/>
<dbReference type="jPOST" id="Q9NVR7"/>
<dbReference type="MassIVE" id="Q9NVR7"/>
<dbReference type="PaxDb" id="9606-ENSP00000411253"/>
<dbReference type="PeptideAtlas" id="Q9NVR7"/>
<dbReference type="ProteomicsDB" id="33956"/>
<dbReference type="ProteomicsDB" id="82851">
    <molecule id="Q9NVR7-1"/>
</dbReference>
<dbReference type="Pumba" id="Q9NVR7"/>
<dbReference type="Antibodypedia" id="46838">
    <property type="antibodies" value="76 antibodies from 16 providers"/>
</dbReference>
<dbReference type="DNASU" id="55171"/>
<dbReference type="Ensembl" id="ENST00000338733.10">
    <molecule id="Q9NVR7-1"/>
    <property type="protein sequence ID" value="ENSP00000341652.5"/>
    <property type="gene ID" value="ENSG00000113838.13"/>
</dbReference>
<dbReference type="Ensembl" id="ENST00000424280.5">
    <molecule id="Q9NVR7-1"/>
    <property type="protein sequence ID" value="ENSP00000411253.1"/>
    <property type="gene ID" value="ENSG00000113838.13"/>
</dbReference>
<dbReference type="Ensembl" id="ENST00000446782.5">
    <molecule id="Q9NVR7-2"/>
    <property type="protein sequence ID" value="ENSP00000397091.1"/>
    <property type="gene ID" value="ENSG00000113838.13"/>
</dbReference>
<dbReference type="GeneID" id="55171"/>
<dbReference type="KEGG" id="hsa:55171"/>
<dbReference type="MANE-Select" id="ENST00000338733.10">
    <property type="protein sequence ID" value="ENSP00000341652.5"/>
    <property type="RefSeq nucleotide sequence ID" value="NM_018138.5"/>
    <property type="RefSeq protein sequence ID" value="NP_060608.1"/>
</dbReference>
<dbReference type="UCSC" id="uc003fqg.5">
    <molecule id="Q9NVR7-1"/>
    <property type="organism name" value="human"/>
</dbReference>
<dbReference type="AGR" id="HGNC:25546"/>
<dbReference type="CTD" id="55171"/>
<dbReference type="DisGeNET" id="55171"/>
<dbReference type="GeneCards" id="TBCCD1"/>
<dbReference type="HGNC" id="HGNC:25546">
    <property type="gene designation" value="TBCCD1"/>
</dbReference>
<dbReference type="HPA" id="ENSG00000113838">
    <property type="expression patterns" value="Low tissue specificity"/>
</dbReference>
<dbReference type="MIM" id="619848">
    <property type="type" value="gene"/>
</dbReference>
<dbReference type="neXtProt" id="NX_Q9NVR7"/>
<dbReference type="OpenTargets" id="ENSG00000113838"/>
<dbReference type="PharmGKB" id="PA143485628"/>
<dbReference type="VEuPathDB" id="HostDB:ENSG00000113838"/>
<dbReference type="eggNOG" id="KOG4416">
    <property type="taxonomic scope" value="Eukaryota"/>
</dbReference>
<dbReference type="GeneTree" id="ENSGT00470000042284"/>
<dbReference type="HOGENOM" id="CLU_016712_1_1_1"/>
<dbReference type="InParanoid" id="Q9NVR7"/>
<dbReference type="OMA" id="VPNAWDQ"/>
<dbReference type="OrthoDB" id="427777at2759"/>
<dbReference type="PAN-GO" id="Q9NVR7">
    <property type="GO annotations" value="3 GO annotations based on evolutionary models"/>
</dbReference>
<dbReference type="PhylomeDB" id="Q9NVR7"/>
<dbReference type="TreeFam" id="TF329418"/>
<dbReference type="PathwayCommons" id="Q9NVR7"/>
<dbReference type="SignaLink" id="Q9NVR7"/>
<dbReference type="BioGRID-ORCS" id="55171">
    <property type="hits" value="14 hits in 1157 CRISPR screens"/>
</dbReference>
<dbReference type="CD-CODE" id="8C2F96ED">
    <property type="entry name" value="Centrosome"/>
</dbReference>
<dbReference type="GenomeRNAi" id="55171"/>
<dbReference type="Pharos" id="Q9NVR7">
    <property type="development level" value="Tbio"/>
</dbReference>
<dbReference type="PRO" id="PR:Q9NVR7"/>
<dbReference type="Proteomes" id="UP000005640">
    <property type="component" value="Chromosome 3"/>
</dbReference>
<dbReference type="RNAct" id="Q9NVR7">
    <property type="molecule type" value="protein"/>
</dbReference>
<dbReference type="Bgee" id="ENSG00000113838">
    <property type="expression patterns" value="Expressed in male germ line stem cell (sensu Vertebrata) in testis and 100 other cell types or tissues"/>
</dbReference>
<dbReference type="ExpressionAtlas" id="Q9NVR7">
    <property type="expression patterns" value="baseline and differential"/>
</dbReference>
<dbReference type="GO" id="GO:0005737">
    <property type="term" value="C:cytoplasm"/>
    <property type="evidence" value="ECO:0007669"/>
    <property type="project" value="UniProtKB-KW"/>
</dbReference>
<dbReference type="GO" id="GO:0031616">
    <property type="term" value="C:spindle pole centrosome"/>
    <property type="evidence" value="ECO:0000314"/>
    <property type="project" value="UniProtKB"/>
</dbReference>
<dbReference type="GO" id="GO:0051661">
    <property type="term" value="P:maintenance of centrosome location"/>
    <property type="evidence" value="ECO:0000315"/>
    <property type="project" value="UniProtKB"/>
</dbReference>
<dbReference type="GO" id="GO:0051684">
    <property type="term" value="P:maintenance of Golgi location"/>
    <property type="evidence" value="ECO:0000315"/>
    <property type="project" value="UniProtKB"/>
</dbReference>
<dbReference type="GO" id="GO:0030334">
    <property type="term" value="P:regulation of cell migration"/>
    <property type="evidence" value="ECO:0000315"/>
    <property type="project" value="UniProtKB"/>
</dbReference>
<dbReference type="GO" id="GO:0008360">
    <property type="term" value="P:regulation of cell shape"/>
    <property type="evidence" value="ECO:0000315"/>
    <property type="project" value="UniProtKB"/>
</dbReference>
<dbReference type="FunFam" id="2.160.20.70:FF:000005">
    <property type="entry name" value="TBCC domain-containing protein 1"/>
    <property type="match status" value="1"/>
</dbReference>
<dbReference type="Gene3D" id="2.160.20.70">
    <property type="match status" value="1"/>
</dbReference>
<dbReference type="InterPro" id="IPR017901">
    <property type="entry name" value="C-CAP_CF_C-like"/>
</dbReference>
<dbReference type="InterPro" id="IPR016098">
    <property type="entry name" value="CAP/MinC_C"/>
</dbReference>
<dbReference type="InterPro" id="IPR036223">
    <property type="entry name" value="CAP_C_sf"/>
</dbReference>
<dbReference type="InterPro" id="IPR006599">
    <property type="entry name" value="CARP_motif"/>
</dbReference>
<dbReference type="InterPro" id="IPR039589">
    <property type="entry name" value="TBCC1"/>
</dbReference>
<dbReference type="InterPro" id="IPR012945">
    <property type="entry name" value="Tubulin-bd_cofactor_C_dom"/>
</dbReference>
<dbReference type="PANTHER" id="PTHR16052">
    <property type="entry name" value="TBCC DOMAIN-CONTAINING PROTEIN 1"/>
    <property type="match status" value="1"/>
</dbReference>
<dbReference type="PANTHER" id="PTHR16052:SF0">
    <property type="entry name" value="TBCC DOMAIN-CONTAINING PROTEIN 1"/>
    <property type="match status" value="1"/>
</dbReference>
<dbReference type="Pfam" id="PF07986">
    <property type="entry name" value="TBCC"/>
    <property type="match status" value="1"/>
</dbReference>
<dbReference type="SMART" id="SM00673">
    <property type="entry name" value="CARP"/>
    <property type="match status" value="2"/>
</dbReference>
<dbReference type="SUPFAM" id="SSF69340">
    <property type="entry name" value="C-terminal domain of adenylylcyclase associated protein"/>
    <property type="match status" value="1"/>
</dbReference>
<dbReference type="PROSITE" id="PS51329">
    <property type="entry name" value="C_CAP_COFACTOR_C"/>
    <property type="match status" value="1"/>
</dbReference>
<name>TBCC1_HUMAN</name>
<feature type="chain" id="PRO_0000304944" description="TBCC domain-containing protein 1">
    <location>
        <begin position="1"/>
        <end position="557"/>
    </location>
</feature>
<feature type="domain" description="C-CAP/cofactor C-like" evidence="1">
    <location>
        <begin position="290"/>
        <end position="435"/>
    </location>
</feature>
<feature type="splice variant" id="VSP_054000" description="In isoform 2." evidence="3">
    <original>MDQSRVLLWVKAEPFI</original>
    <variation>MTDRLKFGFGFHRFLV</variation>
    <location>
        <begin position="1"/>
        <end position="16"/>
    </location>
</feature>
<feature type="splice variant" id="VSP_054001" description="In isoform 2." evidence="3">
    <location>
        <begin position="17"/>
        <end position="112"/>
    </location>
</feature>
<feature type="sequence variant" id="VAR_035123" description="In dbSNP:rs7619912.">
    <original>K</original>
    <variation>R</variation>
    <location>
        <position position="149"/>
    </location>
</feature>
<feature type="sequence conflict" description="In Ref. 1; BAG54031." evidence="4" ref="1">
    <original>D</original>
    <variation>G</variation>
    <location>
        <position position="116"/>
    </location>
</feature>
<feature type="sequence conflict" description="In Ref. 1; BAG54031." evidence="4" ref="1">
    <original>T</original>
    <variation>A</variation>
    <location>
        <position position="455"/>
    </location>
</feature>
<feature type="sequence conflict" description="In Ref. 1; BAG54031." evidence="4" ref="1">
    <original>E</original>
    <variation>D</variation>
    <location>
        <position position="526"/>
    </location>
</feature>
<proteinExistence type="evidence at protein level"/>
<gene>
    <name type="primary">TBCCD1</name>
</gene>